<keyword id="KW-0249">Electron transport</keyword>
<keyword id="KW-0349">Heme</keyword>
<keyword id="KW-0408">Iron</keyword>
<keyword id="KW-0472">Membrane</keyword>
<keyword id="KW-0479">Metal-binding</keyword>
<keyword id="KW-0496">Mitochondrion</keyword>
<keyword id="KW-0999">Mitochondrion inner membrane</keyword>
<keyword id="KW-0679">Respiratory chain</keyword>
<keyword id="KW-0812">Transmembrane</keyword>
<keyword id="KW-1133">Transmembrane helix</keyword>
<keyword id="KW-0813">Transport</keyword>
<keyword id="KW-0830">Ubiquinone</keyword>
<accession>Q9XP78</accession>
<geneLocation type="mitochondrion"/>
<feature type="chain" id="PRO_0000254863" description="Cytochrome b">
    <location>
        <begin position="1"/>
        <end position="381"/>
    </location>
</feature>
<feature type="transmembrane region" description="Helical" evidence="2">
    <location>
        <begin position="33"/>
        <end position="53"/>
    </location>
</feature>
<feature type="transmembrane region" description="Helical" evidence="2">
    <location>
        <begin position="77"/>
        <end position="98"/>
    </location>
</feature>
<feature type="transmembrane region" description="Helical" evidence="2">
    <location>
        <begin position="113"/>
        <end position="133"/>
    </location>
</feature>
<feature type="transmembrane region" description="Helical" evidence="2">
    <location>
        <begin position="178"/>
        <end position="198"/>
    </location>
</feature>
<feature type="transmembrane region" description="Helical" evidence="2">
    <location>
        <begin position="226"/>
        <end position="246"/>
    </location>
</feature>
<feature type="transmembrane region" description="Helical" evidence="2">
    <location>
        <begin position="288"/>
        <end position="308"/>
    </location>
</feature>
<feature type="transmembrane region" description="Helical" evidence="2">
    <location>
        <begin position="320"/>
        <end position="340"/>
    </location>
</feature>
<feature type="transmembrane region" description="Helical" evidence="2">
    <location>
        <begin position="347"/>
        <end position="367"/>
    </location>
</feature>
<feature type="binding site" description="axial binding residue" evidence="2">
    <location>
        <position position="83"/>
    </location>
    <ligand>
        <name>heme b</name>
        <dbReference type="ChEBI" id="CHEBI:60344"/>
        <label>b562</label>
    </ligand>
    <ligandPart>
        <name>Fe</name>
        <dbReference type="ChEBI" id="CHEBI:18248"/>
    </ligandPart>
</feature>
<feature type="binding site" description="axial binding residue" evidence="2">
    <location>
        <position position="97"/>
    </location>
    <ligand>
        <name>heme b</name>
        <dbReference type="ChEBI" id="CHEBI:60344"/>
        <label>b566</label>
    </ligand>
    <ligandPart>
        <name>Fe</name>
        <dbReference type="ChEBI" id="CHEBI:18248"/>
    </ligandPart>
</feature>
<feature type="binding site" description="axial binding residue" evidence="2">
    <location>
        <position position="182"/>
    </location>
    <ligand>
        <name>heme b</name>
        <dbReference type="ChEBI" id="CHEBI:60344"/>
        <label>b562</label>
    </ligand>
    <ligandPart>
        <name>Fe</name>
        <dbReference type="ChEBI" id="CHEBI:18248"/>
    </ligandPart>
</feature>
<feature type="binding site" description="axial binding residue" evidence="2">
    <location>
        <position position="196"/>
    </location>
    <ligand>
        <name>heme b</name>
        <dbReference type="ChEBI" id="CHEBI:60344"/>
        <label>b566</label>
    </ligand>
    <ligandPart>
        <name>Fe</name>
        <dbReference type="ChEBI" id="CHEBI:18248"/>
    </ligandPart>
</feature>
<feature type="binding site" evidence="2">
    <location>
        <position position="201"/>
    </location>
    <ligand>
        <name>a ubiquinone</name>
        <dbReference type="ChEBI" id="CHEBI:16389"/>
    </ligand>
</feature>
<sequence>MINLRKTHPLMKIINHSFIDLPAPSNISAWWNFGSLLGICLMIQILTGLFLAMHYTSDTLTAFSSVAHICRDVNYGWLIRNLHANGASMFFMCLFLHVGRGIYYGSYLYKETWNIGVILLLTVMATAFVGYVLPWGQMSFWGATVITNLLSAIPYIGTTLAEWIWGGFSVDKATLTRFFAFHFILPFIITALVIVHLLFLHETGSNNPSGINPDSDKIPFHPYYTIKDTLGLMILLLVLLSLAYSLSDLLGDPDNFSPANPLSTPPHIKPEWYFLFAYAILRSIPNKLGGVLALLASILILLIIPLLHTANQRSMMFRPISQTLFWILTANLITLTWIGGQPVEQPFIIIGQLASMSYFLLIMVLMPLAGLFENYMLEPEW</sequence>
<dbReference type="EMBL" id="AF088930">
    <property type="protein sequence ID" value="AAD38440.1"/>
    <property type="molecule type" value="Genomic_DNA"/>
</dbReference>
<dbReference type="SMR" id="Q9XP78"/>
<dbReference type="GO" id="GO:0005743">
    <property type="term" value="C:mitochondrial inner membrane"/>
    <property type="evidence" value="ECO:0007669"/>
    <property type="project" value="UniProtKB-SubCell"/>
</dbReference>
<dbReference type="GO" id="GO:0045275">
    <property type="term" value="C:respiratory chain complex III"/>
    <property type="evidence" value="ECO:0007669"/>
    <property type="project" value="InterPro"/>
</dbReference>
<dbReference type="GO" id="GO:0046872">
    <property type="term" value="F:metal ion binding"/>
    <property type="evidence" value="ECO:0007669"/>
    <property type="project" value="UniProtKB-KW"/>
</dbReference>
<dbReference type="GO" id="GO:0008121">
    <property type="term" value="F:ubiquinol-cytochrome-c reductase activity"/>
    <property type="evidence" value="ECO:0007669"/>
    <property type="project" value="InterPro"/>
</dbReference>
<dbReference type="GO" id="GO:0006122">
    <property type="term" value="P:mitochondrial electron transport, ubiquinol to cytochrome c"/>
    <property type="evidence" value="ECO:0007669"/>
    <property type="project" value="TreeGrafter"/>
</dbReference>
<dbReference type="CDD" id="cd00290">
    <property type="entry name" value="cytochrome_b_C"/>
    <property type="match status" value="1"/>
</dbReference>
<dbReference type="CDD" id="cd00284">
    <property type="entry name" value="Cytochrome_b_N"/>
    <property type="match status" value="1"/>
</dbReference>
<dbReference type="FunFam" id="1.20.810.10:FF:000002">
    <property type="entry name" value="Cytochrome b"/>
    <property type="match status" value="1"/>
</dbReference>
<dbReference type="Gene3D" id="1.20.810.10">
    <property type="entry name" value="Cytochrome Bc1 Complex, Chain C"/>
    <property type="match status" value="1"/>
</dbReference>
<dbReference type="InterPro" id="IPR005798">
    <property type="entry name" value="Cyt_b/b6_C"/>
</dbReference>
<dbReference type="InterPro" id="IPR036150">
    <property type="entry name" value="Cyt_b/b6_C_sf"/>
</dbReference>
<dbReference type="InterPro" id="IPR005797">
    <property type="entry name" value="Cyt_b/b6_N"/>
</dbReference>
<dbReference type="InterPro" id="IPR027387">
    <property type="entry name" value="Cytb/b6-like_sf"/>
</dbReference>
<dbReference type="InterPro" id="IPR030689">
    <property type="entry name" value="Cytochrome_b"/>
</dbReference>
<dbReference type="InterPro" id="IPR048260">
    <property type="entry name" value="Cytochrome_b_C_euk/bac"/>
</dbReference>
<dbReference type="InterPro" id="IPR048259">
    <property type="entry name" value="Cytochrome_b_N_euk/bac"/>
</dbReference>
<dbReference type="InterPro" id="IPR016174">
    <property type="entry name" value="Di-haem_cyt_TM"/>
</dbReference>
<dbReference type="PANTHER" id="PTHR19271">
    <property type="entry name" value="CYTOCHROME B"/>
    <property type="match status" value="1"/>
</dbReference>
<dbReference type="PANTHER" id="PTHR19271:SF16">
    <property type="entry name" value="CYTOCHROME B"/>
    <property type="match status" value="1"/>
</dbReference>
<dbReference type="Pfam" id="PF00032">
    <property type="entry name" value="Cytochrom_B_C"/>
    <property type="match status" value="1"/>
</dbReference>
<dbReference type="Pfam" id="PF00033">
    <property type="entry name" value="Cytochrome_B"/>
    <property type="match status" value="1"/>
</dbReference>
<dbReference type="PIRSF" id="PIRSF038885">
    <property type="entry name" value="COB"/>
    <property type="match status" value="1"/>
</dbReference>
<dbReference type="SUPFAM" id="SSF81648">
    <property type="entry name" value="a domain/subunit of cytochrome bc1 complex (Ubiquinol-cytochrome c reductase)"/>
    <property type="match status" value="1"/>
</dbReference>
<dbReference type="SUPFAM" id="SSF81342">
    <property type="entry name" value="Transmembrane di-heme cytochromes"/>
    <property type="match status" value="1"/>
</dbReference>
<dbReference type="PROSITE" id="PS51003">
    <property type="entry name" value="CYTB_CTER"/>
    <property type="match status" value="1"/>
</dbReference>
<dbReference type="PROSITE" id="PS51002">
    <property type="entry name" value="CYTB_NTER"/>
    <property type="match status" value="1"/>
</dbReference>
<gene>
    <name type="primary">MT-CYB</name>
    <name type="synonym">COB</name>
    <name type="synonym">CYTB</name>
    <name type="synonym">MTCYB</name>
</gene>
<reference key="1">
    <citation type="journal article" date="1999" name="Mol. Phylogenet. Evol.">
        <title>Systematic relationships within the dasyurid marsupial tribe Sminthopsini -- a multigene approach.</title>
        <authorList>
            <person name="Blacket M.J."/>
            <person name="Krajewski C."/>
            <person name="Labrinidis A."/>
            <person name="Cambron B."/>
            <person name="Cooper S."/>
            <person name="Westerman M."/>
        </authorList>
    </citation>
    <scope>NUCLEOTIDE SEQUENCE [GENOMIC DNA]</scope>
</reference>
<proteinExistence type="inferred from homology"/>
<organism>
    <name type="scientific">Sminthopsis longicaudata</name>
    <name type="common">Long-tailed dunnart</name>
    <dbReference type="NCBI Taxonomy" id="90764"/>
    <lineage>
        <taxon>Eukaryota</taxon>
        <taxon>Metazoa</taxon>
        <taxon>Chordata</taxon>
        <taxon>Craniata</taxon>
        <taxon>Vertebrata</taxon>
        <taxon>Euteleostomi</taxon>
        <taxon>Mammalia</taxon>
        <taxon>Metatheria</taxon>
        <taxon>Dasyuromorphia</taxon>
        <taxon>Dasyuridae</taxon>
        <taxon>Sminthopsis</taxon>
    </lineage>
</organism>
<comment type="function">
    <text evidence="2">Component of the ubiquinol-cytochrome c reductase complex (complex III or cytochrome b-c1 complex) that is part of the mitochondrial respiratory chain. The b-c1 complex mediates electron transfer from ubiquinol to cytochrome c. Contributes to the generation of a proton gradient across the mitochondrial membrane that is then used for ATP synthesis.</text>
</comment>
<comment type="cofactor">
    <cofactor evidence="2">
        <name>heme b</name>
        <dbReference type="ChEBI" id="CHEBI:60344"/>
    </cofactor>
    <text evidence="2">Binds 2 heme b groups non-covalently.</text>
</comment>
<comment type="subunit">
    <text evidence="2">The cytochrome bc1 complex contains 11 subunits: 3 respiratory subunits (MT-CYB, CYC1 and UQCRFS1), 2 core proteins (UQCRC1 and UQCRC2) and 6 low-molecular weight proteins (UQCRH/QCR6, UQCRB/QCR7, UQCRQ/QCR8, UQCR10/QCR9, UQCR11/QCR10 and a cleavage product of UQCRFS1). This cytochrome bc1 complex then forms a dimer.</text>
</comment>
<comment type="subcellular location">
    <subcellularLocation>
        <location evidence="2">Mitochondrion inner membrane</location>
        <topology evidence="2">Multi-pass membrane protein</topology>
    </subcellularLocation>
</comment>
<comment type="miscellaneous">
    <text evidence="1">Heme 1 (or BL or b562) is low-potential and absorbs at about 562 nm, and heme 2 (or BH or b566) is high-potential and absorbs at about 566 nm.</text>
</comment>
<comment type="similarity">
    <text evidence="3 4">Belongs to the cytochrome b family.</text>
</comment>
<comment type="caution">
    <text evidence="2">The full-length protein contains only eight transmembrane helices, not nine as predicted by bioinformatics tools.</text>
</comment>
<evidence type="ECO:0000250" key="1"/>
<evidence type="ECO:0000250" key="2">
    <source>
        <dbReference type="UniProtKB" id="P00157"/>
    </source>
</evidence>
<evidence type="ECO:0000255" key="3">
    <source>
        <dbReference type="PROSITE-ProRule" id="PRU00967"/>
    </source>
</evidence>
<evidence type="ECO:0000255" key="4">
    <source>
        <dbReference type="PROSITE-ProRule" id="PRU00968"/>
    </source>
</evidence>
<name>CYB_SMILO</name>
<protein>
    <recommendedName>
        <fullName>Cytochrome b</fullName>
    </recommendedName>
    <alternativeName>
        <fullName>Complex III subunit 3</fullName>
    </alternativeName>
    <alternativeName>
        <fullName>Complex III subunit III</fullName>
    </alternativeName>
    <alternativeName>
        <fullName>Cytochrome b-c1 complex subunit 3</fullName>
    </alternativeName>
    <alternativeName>
        <fullName>Ubiquinol-cytochrome-c reductase complex cytochrome b subunit</fullName>
    </alternativeName>
</protein>